<keyword id="KW-0067">ATP-binding</keyword>
<keyword id="KW-0143">Chaperone</keyword>
<keyword id="KW-0479">Metal-binding</keyword>
<keyword id="KW-0547">Nucleotide-binding</keyword>
<keyword id="KW-1185">Reference proteome</keyword>
<keyword id="KW-0862">Zinc</keyword>
<evidence type="ECO:0000255" key="1">
    <source>
        <dbReference type="HAMAP-Rule" id="MF_00175"/>
    </source>
</evidence>
<evidence type="ECO:0000255" key="2">
    <source>
        <dbReference type="PROSITE-ProRule" id="PRU01250"/>
    </source>
</evidence>
<comment type="function">
    <text evidence="1">ATP-dependent specificity component of the Clp protease. It directs the protease to specific substrates. Can perform chaperone functions in the absence of ClpP.</text>
</comment>
<comment type="subunit">
    <text evidence="1">Component of the ClpX-ClpP complex. Forms a hexameric ring that, in the presence of ATP, binds to fourteen ClpP subunits assembled into a disk-like structure with a central cavity, resembling the structure of eukaryotic proteasomes.</text>
</comment>
<comment type="similarity">
    <text evidence="1">Belongs to the ClpX chaperone family.</text>
</comment>
<proteinExistence type="inferred from homology"/>
<gene>
    <name evidence="1" type="primary">clpX</name>
    <name type="ordered locus">ELI_01140</name>
</gene>
<accession>Q2NDC1</accession>
<name>CLPX_ERYLH</name>
<reference key="1">
    <citation type="journal article" date="2009" name="J. Bacteriol.">
        <title>Complete genome sequence of Erythrobacter litoralis HTCC2594.</title>
        <authorList>
            <person name="Oh H.M."/>
            <person name="Giovannoni S.J."/>
            <person name="Ferriera S."/>
            <person name="Johnson J."/>
            <person name="Cho J.C."/>
        </authorList>
    </citation>
    <scope>NUCLEOTIDE SEQUENCE [LARGE SCALE GENOMIC DNA]</scope>
    <source>
        <strain>HTCC2594</strain>
    </source>
</reference>
<organism>
    <name type="scientific">Erythrobacter litoralis (strain HTCC2594)</name>
    <dbReference type="NCBI Taxonomy" id="314225"/>
    <lineage>
        <taxon>Bacteria</taxon>
        <taxon>Pseudomonadati</taxon>
        <taxon>Pseudomonadota</taxon>
        <taxon>Alphaproteobacteria</taxon>
        <taxon>Sphingomonadales</taxon>
        <taxon>Erythrobacteraceae</taxon>
        <taxon>Erythrobacter/Porphyrobacter group</taxon>
        <taxon>Erythrobacter</taxon>
    </lineage>
</organism>
<dbReference type="EMBL" id="CP000157">
    <property type="protein sequence ID" value="ABC62320.1"/>
    <property type="molecule type" value="Genomic_DNA"/>
</dbReference>
<dbReference type="RefSeq" id="WP_011413196.1">
    <property type="nucleotide sequence ID" value="NC_007722.1"/>
</dbReference>
<dbReference type="SMR" id="Q2NDC1"/>
<dbReference type="STRING" id="314225.ELI_01140"/>
<dbReference type="KEGG" id="eli:ELI_01140"/>
<dbReference type="eggNOG" id="COG1219">
    <property type="taxonomic scope" value="Bacteria"/>
</dbReference>
<dbReference type="HOGENOM" id="CLU_014218_8_2_5"/>
<dbReference type="OrthoDB" id="9804062at2"/>
<dbReference type="Proteomes" id="UP000008808">
    <property type="component" value="Chromosome"/>
</dbReference>
<dbReference type="GO" id="GO:0009376">
    <property type="term" value="C:HslUV protease complex"/>
    <property type="evidence" value="ECO:0007669"/>
    <property type="project" value="TreeGrafter"/>
</dbReference>
<dbReference type="GO" id="GO:0005524">
    <property type="term" value="F:ATP binding"/>
    <property type="evidence" value="ECO:0007669"/>
    <property type="project" value="UniProtKB-UniRule"/>
</dbReference>
<dbReference type="GO" id="GO:0016887">
    <property type="term" value="F:ATP hydrolysis activity"/>
    <property type="evidence" value="ECO:0007669"/>
    <property type="project" value="InterPro"/>
</dbReference>
<dbReference type="GO" id="GO:0140662">
    <property type="term" value="F:ATP-dependent protein folding chaperone"/>
    <property type="evidence" value="ECO:0007669"/>
    <property type="project" value="InterPro"/>
</dbReference>
<dbReference type="GO" id="GO:0046983">
    <property type="term" value="F:protein dimerization activity"/>
    <property type="evidence" value="ECO:0007669"/>
    <property type="project" value="InterPro"/>
</dbReference>
<dbReference type="GO" id="GO:0051082">
    <property type="term" value="F:unfolded protein binding"/>
    <property type="evidence" value="ECO:0007669"/>
    <property type="project" value="UniProtKB-UniRule"/>
</dbReference>
<dbReference type="GO" id="GO:0008270">
    <property type="term" value="F:zinc ion binding"/>
    <property type="evidence" value="ECO:0007669"/>
    <property type="project" value="InterPro"/>
</dbReference>
<dbReference type="GO" id="GO:0051301">
    <property type="term" value="P:cell division"/>
    <property type="evidence" value="ECO:0007669"/>
    <property type="project" value="TreeGrafter"/>
</dbReference>
<dbReference type="GO" id="GO:0051603">
    <property type="term" value="P:proteolysis involved in protein catabolic process"/>
    <property type="evidence" value="ECO:0007669"/>
    <property type="project" value="TreeGrafter"/>
</dbReference>
<dbReference type="CDD" id="cd19497">
    <property type="entry name" value="RecA-like_ClpX"/>
    <property type="match status" value="1"/>
</dbReference>
<dbReference type="FunFam" id="1.10.8.60:FF:000002">
    <property type="entry name" value="ATP-dependent Clp protease ATP-binding subunit ClpX"/>
    <property type="match status" value="1"/>
</dbReference>
<dbReference type="FunFam" id="3.40.50.300:FF:000005">
    <property type="entry name" value="ATP-dependent Clp protease ATP-binding subunit ClpX"/>
    <property type="match status" value="1"/>
</dbReference>
<dbReference type="Gene3D" id="1.10.8.60">
    <property type="match status" value="1"/>
</dbReference>
<dbReference type="Gene3D" id="6.20.220.10">
    <property type="entry name" value="ClpX chaperone, C4-type zinc finger domain"/>
    <property type="match status" value="1"/>
</dbReference>
<dbReference type="Gene3D" id="3.40.50.300">
    <property type="entry name" value="P-loop containing nucleotide triphosphate hydrolases"/>
    <property type="match status" value="1"/>
</dbReference>
<dbReference type="HAMAP" id="MF_00175">
    <property type="entry name" value="ClpX"/>
    <property type="match status" value="1"/>
</dbReference>
<dbReference type="InterPro" id="IPR003593">
    <property type="entry name" value="AAA+_ATPase"/>
</dbReference>
<dbReference type="InterPro" id="IPR050052">
    <property type="entry name" value="ATP-dep_Clp_protease_ClpX"/>
</dbReference>
<dbReference type="InterPro" id="IPR003959">
    <property type="entry name" value="ATPase_AAA_core"/>
</dbReference>
<dbReference type="InterPro" id="IPR019489">
    <property type="entry name" value="Clp_ATPase_C"/>
</dbReference>
<dbReference type="InterPro" id="IPR004487">
    <property type="entry name" value="Clp_protease_ATP-bd_su_ClpX"/>
</dbReference>
<dbReference type="InterPro" id="IPR046425">
    <property type="entry name" value="ClpX_bact"/>
</dbReference>
<dbReference type="InterPro" id="IPR027417">
    <property type="entry name" value="P-loop_NTPase"/>
</dbReference>
<dbReference type="InterPro" id="IPR010603">
    <property type="entry name" value="Znf_CppX_C4"/>
</dbReference>
<dbReference type="InterPro" id="IPR038366">
    <property type="entry name" value="Znf_CppX_C4_sf"/>
</dbReference>
<dbReference type="NCBIfam" id="TIGR00382">
    <property type="entry name" value="clpX"/>
    <property type="match status" value="1"/>
</dbReference>
<dbReference type="NCBIfam" id="NF003745">
    <property type="entry name" value="PRK05342.1"/>
    <property type="match status" value="1"/>
</dbReference>
<dbReference type="PANTHER" id="PTHR48102:SF7">
    <property type="entry name" value="ATP-DEPENDENT CLP PROTEASE ATP-BINDING SUBUNIT CLPX-LIKE, MITOCHONDRIAL"/>
    <property type="match status" value="1"/>
</dbReference>
<dbReference type="PANTHER" id="PTHR48102">
    <property type="entry name" value="ATP-DEPENDENT CLP PROTEASE ATP-BINDING SUBUNIT CLPX-LIKE, MITOCHONDRIAL-RELATED"/>
    <property type="match status" value="1"/>
</dbReference>
<dbReference type="Pfam" id="PF07724">
    <property type="entry name" value="AAA_2"/>
    <property type="match status" value="1"/>
</dbReference>
<dbReference type="Pfam" id="PF10431">
    <property type="entry name" value="ClpB_D2-small"/>
    <property type="match status" value="1"/>
</dbReference>
<dbReference type="Pfam" id="PF06689">
    <property type="entry name" value="zf-C4_ClpX"/>
    <property type="match status" value="1"/>
</dbReference>
<dbReference type="SMART" id="SM00382">
    <property type="entry name" value="AAA"/>
    <property type="match status" value="1"/>
</dbReference>
<dbReference type="SMART" id="SM01086">
    <property type="entry name" value="ClpB_D2-small"/>
    <property type="match status" value="1"/>
</dbReference>
<dbReference type="SMART" id="SM00994">
    <property type="entry name" value="zf-C4_ClpX"/>
    <property type="match status" value="1"/>
</dbReference>
<dbReference type="SUPFAM" id="SSF57716">
    <property type="entry name" value="Glucocorticoid receptor-like (DNA-binding domain)"/>
    <property type="match status" value="1"/>
</dbReference>
<dbReference type="SUPFAM" id="SSF52540">
    <property type="entry name" value="P-loop containing nucleoside triphosphate hydrolases"/>
    <property type="match status" value="1"/>
</dbReference>
<dbReference type="PROSITE" id="PS51902">
    <property type="entry name" value="CLPX_ZB"/>
    <property type="match status" value="1"/>
</dbReference>
<feature type="chain" id="PRO_1000024558" description="ATP-dependent Clp protease ATP-binding subunit ClpX">
    <location>
        <begin position="1"/>
        <end position="423"/>
    </location>
</feature>
<feature type="domain" description="ClpX-type ZB" evidence="2">
    <location>
        <begin position="3"/>
        <end position="56"/>
    </location>
</feature>
<feature type="binding site" evidence="2">
    <location>
        <position position="15"/>
    </location>
    <ligand>
        <name>Zn(2+)</name>
        <dbReference type="ChEBI" id="CHEBI:29105"/>
    </ligand>
</feature>
<feature type="binding site" evidence="2">
    <location>
        <position position="18"/>
    </location>
    <ligand>
        <name>Zn(2+)</name>
        <dbReference type="ChEBI" id="CHEBI:29105"/>
    </ligand>
</feature>
<feature type="binding site" evidence="2">
    <location>
        <position position="37"/>
    </location>
    <ligand>
        <name>Zn(2+)</name>
        <dbReference type="ChEBI" id="CHEBI:29105"/>
    </ligand>
</feature>
<feature type="binding site" evidence="2">
    <location>
        <position position="40"/>
    </location>
    <ligand>
        <name>Zn(2+)</name>
        <dbReference type="ChEBI" id="CHEBI:29105"/>
    </ligand>
</feature>
<feature type="binding site" evidence="1">
    <location>
        <begin position="120"/>
        <end position="127"/>
    </location>
    <ligand>
        <name>ATP</name>
        <dbReference type="ChEBI" id="CHEBI:30616"/>
    </ligand>
</feature>
<sequence length="423" mass="46136">MTKLSGTDSKSTLYCSFCGKSQHEVRKLIAGPTVFICDECVELCNDIIREETKAGLTGRKEGDVPAPSEICATLNDYVIGQDRAKRVLSVAVHNHYKRLKHSGKADGVELAKSNILLVGPTGSGKTLLAQTLARTFDVPFTMADATTLTEAGYVGEDVENIILKLLQASDYNVDKAQHGIVYIDEIDKITRKAENPSITRDVSGEGVQQALLKLMEGTTASVPPQGGRKHPQQEFLQVDTTNILFICGGAFAGLDKIIADRLQKRSIGFGAHVADPDKRKVGELLEKSEPEDLLKFGLIPEFVGRLPVIATLHDLDVDALVTILQEPKNAIVKQYSKLFELEDVELTFTDEALQAIAERAILRKTGARGLRSIVEGILLDTMFDLPDLDDISEVVIDADVVEGKKEPIRVVSNDDDGKKEEAA</sequence>
<protein>
    <recommendedName>
        <fullName evidence="1">ATP-dependent Clp protease ATP-binding subunit ClpX</fullName>
    </recommendedName>
</protein>